<evidence type="ECO:0000255" key="1">
    <source>
        <dbReference type="HAMAP-Rule" id="MF_00059"/>
    </source>
</evidence>
<accession>Q3ZJ77</accession>
<protein>
    <recommendedName>
        <fullName evidence="1">DNA-directed RNA polymerase subunit alpha</fullName>
        <shortName evidence="1">PEP</shortName>
        <ecNumber evidence="1">2.7.7.6</ecNumber>
    </recommendedName>
    <alternativeName>
        <fullName evidence="1">Plastid-encoded RNA polymerase subunit alpha</fullName>
        <shortName evidence="1">RNA polymerase subunit alpha</shortName>
    </alternativeName>
</protein>
<keyword id="KW-0150">Chloroplast</keyword>
<keyword id="KW-0240">DNA-directed RNA polymerase</keyword>
<keyword id="KW-0548">Nucleotidyltransferase</keyword>
<keyword id="KW-0934">Plastid</keyword>
<keyword id="KW-0804">Transcription</keyword>
<keyword id="KW-0808">Transferase</keyword>
<reference key="1">
    <citation type="journal article" date="2005" name="Mol. Biol. Evol.">
        <title>The chloroplast genome sequence of the green alga Pseudendoclonium akinetum (Ulvophyceae) reveals unusual structural features and new insights into the branching order of chlorophyte lineages.</title>
        <authorList>
            <person name="Pombert J.-F."/>
            <person name="Otis C."/>
            <person name="Lemieux C."/>
            <person name="Turmel M."/>
        </authorList>
    </citation>
    <scope>NUCLEOTIDE SEQUENCE [LARGE SCALE GENOMIC DNA]</scope>
    <source>
        <strain>UTEX 1912</strain>
    </source>
</reference>
<sequence length="577" mass="66582">MIKIIIKETFSFKSVLMHFLKEKVSNNKISKKNKIMPSYTLLSCIDSRVENLTKFYGRFELGPFAPGQALTVANALRRSLLSQLPGTSITLVEVRGASNEYEIITGVRESILDILLNLKQIVLTSDFEIFSPQIGFLSVEGPGVIRANDLKLPSFIYAVDPNQYIATLSNSGRLNMKFLICCGKNYITYNPNDSQYFEWLSLLKKSKPLIKSNSPKLNKGNINSEIDSDISIDKKNDEVIFFQNANTRVVDSQTALKKGLVLKNTLRINKSSFLINSNYQSFFPKTQQKAFSIFRKNSKTFLSTMGFYKEWKKEREFLKKDLYKNQEDFNKSYDFQETKKKLQTKLIKNFETPKKKLFKVQNSANPFNKAFIPLTEEKVDYDSDFNLDHKSTKIGYFPIDAIFMPINRVNYLIESTEDIKLKIKDRVILEVWTNGSIHPRHAIHKAAKALIQLFLPLQQIRTNLFLISDNSHFEEGQDKIKKRIDNFKKEALLKANPQIQANPQLKKRNFDHRLLELDIANLELTARPYSCLKLANINTIEDLISYSQEDLLSIKNFGRRSLIEVQKALQLMKLTLK</sequence>
<name>RPOA_TUPAK</name>
<organism>
    <name type="scientific">Tupiella akineta</name>
    <name type="common">Green alga</name>
    <name type="synonym">Pseudendoclonium akinetum</name>
    <dbReference type="NCBI Taxonomy" id="160070"/>
    <lineage>
        <taxon>Eukaryota</taxon>
        <taxon>Viridiplantae</taxon>
        <taxon>Chlorophyta</taxon>
        <taxon>Ulvophyceae</taxon>
        <taxon>OUU clade</taxon>
        <taxon>Ulotrichales</taxon>
        <taxon>Tupiellaceae</taxon>
        <taxon>Tupiella</taxon>
    </lineage>
</organism>
<comment type="function">
    <text evidence="1">DNA-dependent RNA polymerase catalyzes the transcription of DNA into RNA using the four ribonucleoside triphosphates as substrates.</text>
</comment>
<comment type="catalytic activity">
    <reaction evidence="1">
        <text>RNA(n) + a ribonucleoside 5'-triphosphate = RNA(n+1) + diphosphate</text>
        <dbReference type="Rhea" id="RHEA:21248"/>
        <dbReference type="Rhea" id="RHEA-COMP:14527"/>
        <dbReference type="Rhea" id="RHEA-COMP:17342"/>
        <dbReference type="ChEBI" id="CHEBI:33019"/>
        <dbReference type="ChEBI" id="CHEBI:61557"/>
        <dbReference type="ChEBI" id="CHEBI:140395"/>
        <dbReference type="EC" id="2.7.7.6"/>
    </reaction>
</comment>
<comment type="subunit">
    <text evidence="1">In plastids the minimal PEP RNA polymerase catalytic core is composed of four subunits: alpha, beta, beta', and beta''. When a (nuclear-encoded) sigma factor is associated with the core the holoenzyme is formed, which can initiate transcription.</text>
</comment>
<comment type="subcellular location">
    <subcellularLocation>
        <location>Plastid</location>
        <location>Chloroplast</location>
    </subcellularLocation>
</comment>
<comment type="domain">
    <text evidence="1">The N-terminal domain is essential for RNAP assembly and basal transcription, whereas the C-terminal domain is involved in interaction with transcriptional regulators and with upstream promoter elements.</text>
</comment>
<comment type="similarity">
    <text evidence="1">Belongs to the RNA polymerase alpha chain family.</text>
</comment>
<geneLocation type="chloroplast"/>
<feature type="chain" id="PRO_0000296907" description="DNA-directed RNA polymerase subunit alpha">
    <location>
        <begin position="1"/>
        <end position="577"/>
    </location>
</feature>
<feature type="region of interest" description="Alpha N-terminal domain (alpha-NTD)" evidence="1">
    <location>
        <begin position="1"/>
        <end position="461"/>
    </location>
</feature>
<feature type="region of interest" description="Alpha C-terminal domain (alpha-CTD)" evidence="1">
    <location>
        <begin position="510"/>
        <end position="577"/>
    </location>
</feature>
<proteinExistence type="inferred from homology"/>
<gene>
    <name evidence="1" type="primary">rpoA</name>
</gene>
<dbReference type="EC" id="2.7.7.6" evidence="1"/>
<dbReference type="EMBL" id="AY835431">
    <property type="protein sequence ID" value="AAV80614.1"/>
    <property type="molecule type" value="Genomic_DNA"/>
</dbReference>
<dbReference type="RefSeq" id="YP_636190.1">
    <property type="nucleotide sequence ID" value="NC_008114.1"/>
</dbReference>
<dbReference type="SMR" id="Q3ZJ77"/>
<dbReference type="GeneID" id="4108814"/>
<dbReference type="GO" id="GO:0009507">
    <property type="term" value="C:chloroplast"/>
    <property type="evidence" value="ECO:0007669"/>
    <property type="project" value="UniProtKB-SubCell"/>
</dbReference>
<dbReference type="GO" id="GO:0000428">
    <property type="term" value="C:DNA-directed RNA polymerase complex"/>
    <property type="evidence" value="ECO:0007669"/>
    <property type="project" value="UniProtKB-KW"/>
</dbReference>
<dbReference type="GO" id="GO:0005739">
    <property type="term" value="C:mitochondrion"/>
    <property type="evidence" value="ECO:0007669"/>
    <property type="project" value="GOC"/>
</dbReference>
<dbReference type="GO" id="GO:0003677">
    <property type="term" value="F:DNA binding"/>
    <property type="evidence" value="ECO:0007669"/>
    <property type="project" value="UniProtKB-UniRule"/>
</dbReference>
<dbReference type="GO" id="GO:0003899">
    <property type="term" value="F:DNA-directed RNA polymerase activity"/>
    <property type="evidence" value="ECO:0007669"/>
    <property type="project" value="UniProtKB-UniRule"/>
</dbReference>
<dbReference type="GO" id="GO:0046983">
    <property type="term" value="F:protein dimerization activity"/>
    <property type="evidence" value="ECO:0007669"/>
    <property type="project" value="InterPro"/>
</dbReference>
<dbReference type="GO" id="GO:0006351">
    <property type="term" value="P:DNA-templated transcription"/>
    <property type="evidence" value="ECO:0007669"/>
    <property type="project" value="UniProtKB-UniRule"/>
</dbReference>
<dbReference type="CDD" id="cd06928">
    <property type="entry name" value="RNAP_alpha_NTD"/>
    <property type="match status" value="1"/>
</dbReference>
<dbReference type="Gene3D" id="1.10.150.20">
    <property type="entry name" value="5' to 3' exonuclease, C-terminal subdomain"/>
    <property type="match status" value="1"/>
</dbReference>
<dbReference type="Gene3D" id="2.170.120.12">
    <property type="entry name" value="DNA-directed RNA polymerase, insert domain"/>
    <property type="match status" value="1"/>
</dbReference>
<dbReference type="Gene3D" id="3.30.1360.10">
    <property type="entry name" value="RNA polymerase, RBP11-like subunit"/>
    <property type="match status" value="1"/>
</dbReference>
<dbReference type="HAMAP" id="MF_00059">
    <property type="entry name" value="RNApol_bact_RpoA"/>
    <property type="match status" value="1"/>
</dbReference>
<dbReference type="InterPro" id="IPR011262">
    <property type="entry name" value="DNA-dir_RNA_pol_insert"/>
</dbReference>
<dbReference type="InterPro" id="IPR011263">
    <property type="entry name" value="DNA-dir_RNA_pol_RpoA/D/Rpb3"/>
</dbReference>
<dbReference type="InterPro" id="IPR011773">
    <property type="entry name" value="DNA-dir_RpoA"/>
</dbReference>
<dbReference type="InterPro" id="IPR036603">
    <property type="entry name" value="RBP11-like"/>
</dbReference>
<dbReference type="InterPro" id="IPR011260">
    <property type="entry name" value="RNAP_asu_C"/>
</dbReference>
<dbReference type="InterPro" id="IPR036643">
    <property type="entry name" value="RNApol_insert_sf"/>
</dbReference>
<dbReference type="Pfam" id="PF01000">
    <property type="entry name" value="RNA_pol_A_bac"/>
    <property type="match status" value="1"/>
</dbReference>
<dbReference type="Pfam" id="PF03118">
    <property type="entry name" value="RNA_pol_A_CTD"/>
    <property type="match status" value="1"/>
</dbReference>
<dbReference type="Pfam" id="PF01193">
    <property type="entry name" value="RNA_pol_L"/>
    <property type="match status" value="1"/>
</dbReference>
<dbReference type="SMART" id="SM00662">
    <property type="entry name" value="RPOLD"/>
    <property type="match status" value="1"/>
</dbReference>
<dbReference type="SUPFAM" id="SSF47789">
    <property type="entry name" value="C-terminal domain of RNA polymerase alpha subunit"/>
    <property type="match status" value="1"/>
</dbReference>
<dbReference type="SUPFAM" id="SSF56553">
    <property type="entry name" value="Insert subdomain of RNA polymerase alpha subunit"/>
    <property type="match status" value="1"/>
</dbReference>
<dbReference type="SUPFAM" id="SSF55257">
    <property type="entry name" value="RBP11-like subunits of RNA polymerase"/>
    <property type="match status" value="1"/>
</dbReference>